<accession>P19252</accession>
<accession>O49926</accession>
<comment type="catalytic activity">
    <reaction>
        <text>L-aspartate + L-glutamine + ATP + H2O = L-asparagine + L-glutamate + AMP + diphosphate + H(+)</text>
        <dbReference type="Rhea" id="RHEA:12228"/>
        <dbReference type="ChEBI" id="CHEBI:15377"/>
        <dbReference type="ChEBI" id="CHEBI:15378"/>
        <dbReference type="ChEBI" id="CHEBI:29985"/>
        <dbReference type="ChEBI" id="CHEBI:29991"/>
        <dbReference type="ChEBI" id="CHEBI:30616"/>
        <dbReference type="ChEBI" id="CHEBI:33019"/>
        <dbReference type="ChEBI" id="CHEBI:58048"/>
        <dbReference type="ChEBI" id="CHEBI:58359"/>
        <dbReference type="ChEBI" id="CHEBI:456215"/>
        <dbReference type="EC" id="6.3.5.4"/>
    </reaction>
</comment>
<comment type="pathway">
    <text>Amino-acid biosynthesis; L-asparagine biosynthesis; L-asparagine from L-aspartate (L-Gln route): step 1/1.</text>
</comment>
<comment type="tissue specificity">
    <text>Roots.</text>
</comment>
<comment type="induction">
    <text>By darkness.</text>
</comment>
<gene>
    <name type="primary">AS2</name>
</gene>
<reference key="1">
    <citation type="journal article" date="1990" name="EMBO J.">
        <title>Dark-induced and organ-specific expression of two asparagine synthetase genes in Pisum sativum.</title>
        <authorList>
            <person name="Tsai F.Y."/>
            <person name="Coruzzi G.M."/>
        </authorList>
    </citation>
    <scope>NUCLEOTIDE SEQUENCE [MRNA]</scope>
    <source>
        <strain>cv. Sparkle</strain>
        <tissue>Root</tissue>
    </source>
</reference>
<reference key="2">
    <citation type="journal article" date="1997" name="Plant J.">
        <title>Light-induced transcriptional repression of the pea AS1 gene: identification of cis-elements and transfactors.</title>
        <authorList>
            <person name="Ngai N."/>
            <person name="Tsai F.Y."/>
            <person name="Coruzzi G.M."/>
        </authorList>
    </citation>
    <scope>NUCLEOTIDE SEQUENCE [GENOMIC DNA] OF 1-84</scope>
    <source>
        <strain>cv. Feltham First</strain>
    </source>
</reference>
<dbReference type="EC" id="6.3.5.4"/>
<dbReference type="EMBL" id="X52180">
    <property type="protein sequence ID" value="CAA36430.1"/>
    <property type="molecule type" value="mRNA"/>
</dbReference>
<dbReference type="EMBL" id="Y13322">
    <property type="protein sequence ID" value="CAA73763.1"/>
    <property type="molecule type" value="Genomic_DNA"/>
</dbReference>
<dbReference type="PIR" id="S11443">
    <property type="entry name" value="AJPMN2"/>
</dbReference>
<dbReference type="SMR" id="P19252"/>
<dbReference type="UniPathway" id="UPA00134">
    <property type="reaction ID" value="UER00195"/>
</dbReference>
<dbReference type="GO" id="GO:0005829">
    <property type="term" value="C:cytosol"/>
    <property type="evidence" value="ECO:0007669"/>
    <property type="project" value="TreeGrafter"/>
</dbReference>
<dbReference type="GO" id="GO:0004066">
    <property type="term" value="F:asparagine synthase (glutamine-hydrolyzing) activity"/>
    <property type="evidence" value="ECO:0007669"/>
    <property type="project" value="UniProtKB-EC"/>
</dbReference>
<dbReference type="GO" id="GO:0005524">
    <property type="term" value="F:ATP binding"/>
    <property type="evidence" value="ECO:0007669"/>
    <property type="project" value="UniProtKB-KW"/>
</dbReference>
<dbReference type="GO" id="GO:0070981">
    <property type="term" value="P:L-asparagine biosynthetic process"/>
    <property type="evidence" value="ECO:0007669"/>
    <property type="project" value="UniProtKB-UniPathway"/>
</dbReference>
<dbReference type="CDD" id="cd01991">
    <property type="entry name" value="Asn_synthase_B_C"/>
    <property type="match status" value="1"/>
</dbReference>
<dbReference type="CDD" id="cd00712">
    <property type="entry name" value="AsnB"/>
    <property type="match status" value="1"/>
</dbReference>
<dbReference type="FunFam" id="3.40.50.620:FF:000055">
    <property type="entry name" value="Asparagine synthetase [glutamine-hydrolyzing]"/>
    <property type="match status" value="1"/>
</dbReference>
<dbReference type="FunFam" id="3.60.20.10:FF:000024">
    <property type="entry name" value="Asparagine synthetase [glutamine-hydrolyzing]"/>
    <property type="match status" value="1"/>
</dbReference>
<dbReference type="Gene3D" id="3.60.20.10">
    <property type="entry name" value="Glutamine Phosphoribosylpyrophosphate, subunit 1, domain 1"/>
    <property type="match status" value="1"/>
</dbReference>
<dbReference type="Gene3D" id="3.40.50.620">
    <property type="entry name" value="HUPs"/>
    <property type="match status" value="1"/>
</dbReference>
<dbReference type="InterPro" id="IPR006426">
    <property type="entry name" value="Asn_synth_AEB"/>
</dbReference>
<dbReference type="InterPro" id="IPR001962">
    <property type="entry name" value="Asn_synthase"/>
</dbReference>
<dbReference type="InterPro" id="IPR050795">
    <property type="entry name" value="Asn_Synthetase"/>
</dbReference>
<dbReference type="InterPro" id="IPR033738">
    <property type="entry name" value="AsnB_N"/>
</dbReference>
<dbReference type="InterPro" id="IPR017932">
    <property type="entry name" value="GATase_2_dom"/>
</dbReference>
<dbReference type="InterPro" id="IPR029055">
    <property type="entry name" value="Ntn_hydrolases_N"/>
</dbReference>
<dbReference type="InterPro" id="IPR014729">
    <property type="entry name" value="Rossmann-like_a/b/a_fold"/>
</dbReference>
<dbReference type="NCBIfam" id="TIGR01536">
    <property type="entry name" value="asn_synth_AEB"/>
    <property type="match status" value="1"/>
</dbReference>
<dbReference type="NCBIfam" id="NF006949">
    <property type="entry name" value="PRK09431.1"/>
    <property type="match status" value="1"/>
</dbReference>
<dbReference type="PANTHER" id="PTHR11772">
    <property type="entry name" value="ASPARAGINE SYNTHETASE"/>
    <property type="match status" value="1"/>
</dbReference>
<dbReference type="PANTHER" id="PTHR11772:SF45">
    <property type="entry name" value="ASPARAGINE SYNTHETASE [GLUTAMINE-HYDROLYZING]"/>
    <property type="match status" value="1"/>
</dbReference>
<dbReference type="Pfam" id="PF00733">
    <property type="entry name" value="Asn_synthase"/>
    <property type="match status" value="1"/>
</dbReference>
<dbReference type="Pfam" id="PF13537">
    <property type="entry name" value="GATase_7"/>
    <property type="match status" value="1"/>
</dbReference>
<dbReference type="PIRSF" id="PIRSF001589">
    <property type="entry name" value="Asn_synthetase_glu-h"/>
    <property type="match status" value="1"/>
</dbReference>
<dbReference type="SUPFAM" id="SSF52402">
    <property type="entry name" value="Adenine nucleotide alpha hydrolases-like"/>
    <property type="match status" value="1"/>
</dbReference>
<dbReference type="SUPFAM" id="SSF56235">
    <property type="entry name" value="N-terminal nucleophile aminohydrolases (Ntn hydrolases)"/>
    <property type="match status" value="1"/>
</dbReference>
<dbReference type="PROSITE" id="PS51278">
    <property type="entry name" value="GATASE_TYPE_2"/>
    <property type="match status" value="1"/>
</dbReference>
<keyword id="KW-0028">Amino-acid biosynthesis</keyword>
<keyword id="KW-0061">Asparagine biosynthesis</keyword>
<keyword id="KW-0067">ATP-binding</keyword>
<keyword id="KW-0315">Glutamine amidotransferase</keyword>
<keyword id="KW-0436">Ligase</keyword>
<keyword id="KW-0547">Nucleotide-binding</keyword>
<organism>
    <name type="scientific">Pisum sativum</name>
    <name type="common">Garden pea</name>
    <name type="synonym">Lathyrus oleraceus</name>
    <dbReference type="NCBI Taxonomy" id="3888"/>
    <lineage>
        <taxon>Eukaryota</taxon>
        <taxon>Viridiplantae</taxon>
        <taxon>Streptophyta</taxon>
        <taxon>Embryophyta</taxon>
        <taxon>Tracheophyta</taxon>
        <taxon>Spermatophyta</taxon>
        <taxon>Magnoliopsida</taxon>
        <taxon>eudicotyledons</taxon>
        <taxon>Gunneridae</taxon>
        <taxon>Pentapetalae</taxon>
        <taxon>rosids</taxon>
        <taxon>fabids</taxon>
        <taxon>Fabales</taxon>
        <taxon>Fabaceae</taxon>
        <taxon>Papilionoideae</taxon>
        <taxon>50 kb inversion clade</taxon>
        <taxon>NPAAA clade</taxon>
        <taxon>Hologalegina</taxon>
        <taxon>IRL clade</taxon>
        <taxon>Fabeae</taxon>
        <taxon>Pisum</taxon>
    </lineage>
</organism>
<evidence type="ECO:0000250" key="1"/>
<evidence type="ECO:0000255" key="2">
    <source>
        <dbReference type="PROSITE-ProRule" id="PRU00609"/>
    </source>
</evidence>
<evidence type="ECO:0000305" key="3"/>
<protein>
    <recommendedName>
        <fullName>Asparagine synthetase, root [glutamine-hydrolyzing]</fullName>
        <ecNumber>6.3.5.4</ecNumber>
    </recommendedName>
    <alternativeName>
        <fullName>Glutamine-dependent asparagine synthetase</fullName>
    </alternativeName>
</protein>
<name>ASNS2_PEA</name>
<sequence>MCGILAVLGCSDPSRAKRVRVLELSRRLKHRGPEWSGLHQHGDCYLAQQRLAIVDPASGDQPLFNEDNPSIVTVNGEIYNHEDLRKQLSNHTFRTGSDCDVIAHLYEEYGEDFVDMLDGIFSFVPLDTRDNSYIVARDAIGVTSLYIGWGLDGSVWISSEMKGLNDDCEHFECFPPGHLYSSKDSGFRRWYNPSWYSEAIPSAPYDPLALRHAFEKAVVKRLMTDVPFGVLLSGGLDSSLVASITSRYLATTKAAEQWGSKLHSFCVGLEGSPDLKAGKEVADYLGTVHHEFTFTVQDGIDAIEDVIYHVETYDVTSIRASTPMFLMSRKIKSLGVKWVISGEGSDEIFGGYLYFHKAPNKEEFHEETCRKIKALHQYDCQRANKSTYAWGLEARVPFLDKAFINVAMNIDPENKMIKRDEGRIEKYILRKAFDDEENPYLPKHILYRQKEQFSDGVGYSWIDGLKAHAAKHVTDKMMLNAGNIFPHNTPNTKEAYYYRMIFERFFPQNSARLTVPGGPTVACSTAKAVEWDAAWSNNLDPSGRAALGVHDSAYENHNKVNKTVEFEKIIPLEAAPVELAIQG</sequence>
<feature type="initiator methionine" description="Removed" evidence="1">
    <location>
        <position position="1"/>
    </location>
</feature>
<feature type="chain" id="PRO_0000056927" description="Asparagine synthetase, root [glutamine-hydrolyzing]">
    <location>
        <begin position="2"/>
        <end position="583"/>
    </location>
</feature>
<feature type="domain" description="Glutamine amidotransferase type-2" evidence="2">
    <location>
        <begin position="2"/>
        <end position="185"/>
    </location>
</feature>
<feature type="domain" description="Asparagine synthetase">
    <location>
        <begin position="237"/>
        <end position="516"/>
    </location>
</feature>
<feature type="active site" description="For GATase activity" evidence="1">
    <location>
        <position position="2"/>
    </location>
</feature>
<feature type="binding site" evidence="1">
    <location>
        <begin position="50"/>
        <end position="54"/>
    </location>
    <ligand>
        <name>L-glutamine</name>
        <dbReference type="ChEBI" id="CHEBI:58359"/>
    </ligand>
</feature>
<feature type="binding site" evidence="1">
    <location>
        <begin position="75"/>
        <end position="77"/>
    </location>
    <ligand>
        <name>L-glutamine</name>
        <dbReference type="ChEBI" id="CHEBI:58359"/>
    </ligand>
</feature>
<feature type="binding site" evidence="1">
    <location>
        <position position="98"/>
    </location>
    <ligand>
        <name>L-glutamine</name>
        <dbReference type="ChEBI" id="CHEBI:58359"/>
    </ligand>
</feature>
<feature type="binding site" evidence="1">
    <location>
        <position position="231"/>
    </location>
    <ligand>
        <name>ATP</name>
        <dbReference type="ChEBI" id="CHEBI:30616"/>
    </ligand>
</feature>
<feature type="binding site" evidence="1">
    <location>
        <position position="267"/>
    </location>
    <ligand>
        <name>ATP</name>
        <dbReference type="ChEBI" id="CHEBI:30616"/>
    </ligand>
</feature>
<feature type="binding site" evidence="1">
    <location>
        <begin position="341"/>
        <end position="342"/>
    </location>
    <ligand>
        <name>ATP</name>
        <dbReference type="ChEBI" id="CHEBI:30616"/>
    </ligand>
</feature>
<feature type="site" description="Important for beta-aspartyl-AMP intermediate formation" evidence="1">
    <location>
        <position position="343"/>
    </location>
</feature>
<feature type="sequence conflict" description="In Ref. 2; CAA73763." evidence="3" ref="2">
    <original>E</original>
    <variation>D</variation>
    <location>
        <position position="34"/>
    </location>
</feature>
<feature type="sequence conflict" description="In Ref. 2; CAA73763." evidence="3" ref="2">
    <original>Y</original>
    <variation>F</variation>
    <location>
        <position position="45"/>
    </location>
</feature>
<feature type="sequence conflict" description="In Ref. 2; CAA73763." evidence="3" ref="2">
    <original>Q</original>
    <variation>H</variation>
    <location>
        <position position="48"/>
    </location>
</feature>
<feature type="sequence conflict" description="In Ref. 2; CAA73763." evidence="3" ref="2">
    <original>I</original>
    <variation>L</variation>
    <location>
        <position position="78"/>
    </location>
</feature>
<proteinExistence type="evidence at transcript level"/>